<proteinExistence type="inferred from homology"/>
<keyword id="KW-0974">Archaeal flagellum</keyword>
<keyword id="KW-1185">Reference proteome</keyword>
<protein>
    <recommendedName>
        <fullName>Flagellin B3</fullName>
    </recommendedName>
</protein>
<dbReference type="EMBL" id="AB018434">
    <property type="protein sequence ID" value="BAA84107.1"/>
    <property type="molecule type" value="Genomic_DNA"/>
</dbReference>
<dbReference type="EMBL" id="AP006878">
    <property type="protein sequence ID" value="BAD84229.1"/>
    <property type="molecule type" value="Genomic_DNA"/>
</dbReference>
<dbReference type="RefSeq" id="WP_011248995.1">
    <property type="nucleotide sequence ID" value="NC_006624.1"/>
</dbReference>
<dbReference type="SMR" id="Q9V2W9"/>
<dbReference type="FunCoup" id="Q9V2W9">
    <property type="interactions" value="2"/>
</dbReference>
<dbReference type="STRING" id="69014.TK0040"/>
<dbReference type="EnsemblBacteria" id="BAD84229">
    <property type="protein sequence ID" value="BAD84229"/>
    <property type="gene ID" value="TK0040"/>
</dbReference>
<dbReference type="GeneID" id="78446542"/>
<dbReference type="KEGG" id="tko:TK0040"/>
<dbReference type="PATRIC" id="fig|69014.16.peg.40"/>
<dbReference type="eggNOG" id="arCOG01829">
    <property type="taxonomic scope" value="Archaea"/>
</dbReference>
<dbReference type="HOGENOM" id="CLU_051124_0_1_2"/>
<dbReference type="InParanoid" id="Q9V2W9"/>
<dbReference type="OrthoDB" id="102632at2157"/>
<dbReference type="PhylomeDB" id="Q9V2W9"/>
<dbReference type="Proteomes" id="UP000000536">
    <property type="component" value="Chromosome"/>
</dbReference>
<dbReference type="GO" id="GO:0097589">
    <property type="term" value="C:archaeal-type flagellum"/>
    <property type="evidence" value="ECO:0007669"/>
    <property type="project" value="UniProtKB-SubCell"/>
</dbReference>
<dbReference type="GO" id="GO:0005198">
    <property type="term" value="F:structural molecule activity"/>
    <property type="evidence" value="ECO:0007669"/>
    <property type="project" value="InterPro"/>
</dbReference>
<dbReference type="GO" id="GO:0097588">
    <property type="term" value="P:archaeal or bacterial-type flagellum-dependent cell motility"/>
    <property type="evidence" value="ECO:0007669"/>
    <property type="project" value="InterPro"/>
</dbReference>
<dbReference type="InterPro" id="IPR013373">
    <property type="entry name" value="Flagellin/pilin_N_arc"/>
</dbReference>
<dbReference type="InterPro" id="IPR002774">
    <property type="entry name" value="Flagellin_arc"/>
</dbReference>
<dbReference type="NCBIfam" id="TIGR02537">
    <property type="entry name" value="arch_flag_Nterm"/>
    <property type="match status" value="1"/>
</dbReference>
<dbReference type="NCBIfam" id="NF006325">
    <property type="entry name" value="PRK08541.1"/>
    <property type="match status" value="1"/>
</dbReference>
<dbReference type="PANTHER" id="PTHR35903">
    <property type="entry name" value="FLAGELLIN B1"/>
    <property type="match status" value="1"/>
</dbReference>
<dbReference type="PANTHER" id="PTHR35903:SF1">
    <property type="entry name" value="FLAGELLIN B1"/>
    <property type="match status" value="1"/>
</dbReference>
<dbReference type="Pfam" id="PF01917">
    <property type="entry name" value="Arch_flagellin"/>
    <property type="match status" value="1"/>
</dbReference>
<evidence type="ECO:0000250" key="1"/>
<evidence type="ECO:0000305" key="2"/>
<organism>
    <name type="scientific">Thermococcus kodakarensis (strain ATCC BAA-918 / JCM 12380 / KOD1)</name>
    <name type="common">Pyrococcus kodakaraensis (strain KOD1)</name>
    <dbReference type="NCBI Taxonomy" id="69014"/>
    <lineage>
        <taxon>Archaea</taxon>
        <taxon>Methanobacteriati</taxon>
        <taxon>Methanobacteriota</taxon>
        <taxon>Thermococci</taxon>
        <taxon>Thermococcales</taxon>
        <taxon>Thermococcaceae</taxon>
        <taxon>Thermococcus</taxon>
    </lineage>
</organism>
<comment type="function">
    <text>Flagellin is the subunit protein which polymerizes to form the filaments of archaeal flagella.</text>
</comment>
<comment type="subcellular location">
    <subcellularLocation>
        <location>Archaeal flagellum</location>
    </subcellularLocation>
</comment>
<comment type="similarity">
    <text evidence="2">Belongs to the archaeal flagellin family.</text>
</comment>
<gene>
    <name type="primary">flaB3</name>
    <name type="ordered locus">TK0040</name>
</gene>
<accession>Q9V2W9</accession>
<sequence>MRFLKKRGAVGIGTLIVFIAMVLVAAVAAAVLINTSGYLQQKSQSTGRQTTEEVASGIKVTSIVGYAPYDDSNKVYKPISKLAIYVSPNAGSAGIDMKKVRVILSDGSIEAVLKYDNSDADSDGTLDKDVFAVGMPDNVFEDDTGTTAYDGDQYITWSELNDKTFGIIVVQDSDGSLKPLTPTLNKGDIAIIAVRVGNYYVDSNGNLQAYSPTPDGVFGEGIKPNTHITGQVVPEHGAPGVIDFTTPSTYTQSVMELQ</sequence>
<reference key="1">
    <citation type="journal article" date="1999" name="FEMS Microbiol. Lett.">
        <title>Sequence and transcriptional studies of five clustered flagellin genes from hyperthermophilic archaeon Pyrococcus kodakaraensis KOD1.</title>
        <authorList>
            <person name="Nagahisa K."/>
            <person name="Ezaki S."/>
            <person name="Fujiwara S."/>
            <person name="Imanaka T."/>
            <person name="Takagi M."/>
        </authorList>
    </citation>
    <scope>NUCLEOTIDE SEQUENCE [GENOMIC DNA]</scope>
    <source>
        <strain>ATCC BAA-918 / JCM 12380 / KOD1</strain>
    </source>
</reference>
<reference key="2">
    <citation type="journal article" date="2005" name="Genome Res.">
        <title>Complete genome sequence of the hyperthermophilic archaeon Thermococcus kodakaraensis KOD1 and comparison with Pyrococcus genomes.</title>
        <authorList>
            <person name="Fukui T."/>
            <person name="Atomi H."/>
            <person name="Kanai T."/>
            <person name="Matsumi R."/>
            <person name="Fujiwara S."/>
            <person name="Imanaka T."/>
        </authorList>
    </citation>
    <scope>NUCLEOTIDE SEQUENCE [LARGE SCALE GENOMIC DNA]</scope>
    <source>
        <strain>ATCC BAA-918 / JCM 12380 / KOD1</strain>
    </source>
</reference>
<feature type="propeptide" id="PRO_0000009413" evidence="1">
    <location>
        <begin position="1"/>
        <end position="8"/>
    </location>
</feature>
<feature type="chain" id="PRO_0000009414" description="Flagellin B3">
    <location>
        <begin position="9"/>
        <end position="258"/>
    </location>
</feature>
<name>FLAB3_THEKO</name>